<protein>
    <recommendedName>
        <fullName evidence="1">Large ribosomal subunit protein uL1</fullName>
    </recommendedName>
    <alternativeName>
        <fullName evidence="2">50S ribosomal protein L1</fullName>
    </alternativeName>
</protein>
<dbReference type="EMBL" id="AE016830">
    <property type="protein sequence ID" value="AAO82420.1"/>
    <property type="molecule type" value="Genomic_DNA"/>
</dbReference>
<dbReference type="RefSeq" id="NP_816350.1">
    <property type="nucleotide sequence ID" value="NC_004668.1"/>
</dbReference>
<dbReference type="RefSeq" id="WP_002356425.1">
    <property type="nucleotide sequence ID" value="NZ_KE136528.1"/>
</dbReference>
<dbReference type="PDB" id="7P7Q">
    <property type="method" value="EM"/>
    <property type="resolution" value="2.40 A"/>
    <property type="chains" value="F=1-229"/>
</dbReference>
<dbReference type="PDB" id="7P7R">
    <property type="method" value="EM"/>
    <property type="resolution" value="2.90 A"/>
    <property type="chains" value="F=1-229"/>
</dbReference>
<dbReference type="PDBsum" id="7P7Q"/>
<dbReference type="PDBsum" id="7P7R"/>
<dbReference type="EMDB" id="EMD-13241"/>
<dbReference type="EMDB" id="EMD-13242"/>
<dbReference type="SMR" id="Q830Q6"/>
<dbReference type="STRING" id="226185.EF_2718"/>
<dbReference type="EnsemblBacteria" id="AAO82420">
    <property type="protein sequence ID" value="AAO82420"/>
    <property type="gene ID" value="EF_2718"/>
</dbReference>
<dbReference type="GeneID" id="60894705"/>
<dbReference type="KEGG" id="efa:EF2718"/>
<dbReference type="PATRIC" id="fig|226185.45.peg.849"/>
<dbReference type="eggNOG" id="COG0081">
    <property type="taxonomic scope" value="Bacteria"/>
</dbReference>
<dbReference type="HOGENOM" id="CLU_062853_0_0_9"/>
<dbReference type="Proteomes" id="UP000001415">
    <property type="component" value="Chromosome"/>
</dbReference>
<dbReference type="GO" id="GO:0015934">
    <property type="term" value="C:large ribosomal subunit"/>
    <property type="evidence" value="ECO:0007669"/>
    <property type="project" value="InterPro"/>
</dbReference>
<dbReference type="GO" id="GO:0019843">
    <property type="term" value="F:rRNA binding"/>
    <property type="evidence" value="ECO:0007669"/>
    <property type="project" value="UniProtKB-UniRule"/>
</dbReference>
<dbReference type="GO" id="GO:0003735">
    <property type="term" value="F:structural constituent of ribosome"/>
    <property type="evidence" value="ECO:0007669"/>
    <property type="project" value="InterPro"/>
</dbReference>
<dbReference type="GO" id="GO:0000049">
    <property type="term" value="F:tRNA binding"/>
    <property type="evidence" value="ECO:0007669"/>
    <property type="project" value="UniProtKB-KW"/>
</dbReference>
<dbReference type="GO" id="GO:0006417">
    <property type="term" value="P:regulation of translation"/>
    <property type="evidence" value="ECO:0007669"/>
    <property type="project" value="UniProtKB-KW"/>
</dbReference>
<dbReference type="GO" id="GO:0006412">
    <property type="term" value="P:translation"/>
    <property type="evidence" value="ECO:0007669"/>
    <property type="project" value="UniProtKB-UniRule"/>
</dbReference>
<dbReference type="CDD" id="cd00403">
    <property type="entry name" value="Ribosomal_L1"/>
    <property type="match status" value="1"/>
</dbReference>
<dbReference type="FunFam" id="3.40.50.790:FF:000001">
    <property type="entry name" value="50S ribosomal protein L1"/>
    <property type="match status" value="1"/>
</dbReference>
<dbReference type="Gene3D" id="3.30.190.20">
    <property type="match status" value="1"/>
</dbReference>
<dbReference type="Gene3D" id="3.40.50.790">
    <property type="match status" value="1"/>
</dbReference>
<dbReference type="HAMAP" id="MF_01318_B">
    <property type="entry name" value="Ribosomal_uL1_B"/>
    <property type="match status" value="1"/>
</dbReference>
<dbReference type="InterPro" id="IPR005878">
    <property type="entry name" value="Ribosom_uL1_bac-type"/>
</dbReference>
<dbReference type="InterPro" id="IPR002143">
    <property type="entry name" value="Ribosomal_uL1"/>
</dbReference>
<dbReference type="InterPro" id="IPR023674">
    <property type="entry name" value="Ribosomal_uL1-like"/>
</dbReference>
<dbReference type="InterPro" id="IPR028364">
    <property type="entry name" value="Ribosomal_uL1/biogenesis"/>
</dbReference>
<dbReference type="InterPro" id="IPR016095">
    <property type="entry name" value="Ribosomal_uL1_3-a/b-sand"/>
</dbReference>
<dbReference type="InterPro" id="IPR023673">
    <property type="entry name" value="Ribosomal_uL1_CS"/>
</dbReference>
<dbReference type="NCBIfam" id="TIGR01169">
    <property type="entry name" value="rplA_bact"/>
    <property type="match status" value="1"/>
</dbReference>
<dbReference type="PANTHER" id="PTHR36427">
    <property type="entry name" value="54S RIBOSOMAL PROTEIN L1, MITOCHONDRIAL"/>
    <property type="match status" value="1"/>
</dbReference>
<dbReference type="PANTHER" id="PTHR36427:SF3">
    <property type="entry name" value="LARGE RIBOSOMAL SUBUNIT PROTEIN UL1M"/>
    <property type="match status" value="1"/>
</dbReference>
<dbReference type="Pfam" id="PF00687">
    <property type="entry name" value="Ribosomal_L1"/>
    <property type="match status" value="1"/>
</dbReference>
<dbReference type="PIRSF" id="PIRSF002155">
    <property type="entry name" value="Ribosomal_L1"/>
    <property type="match status" value="1"/>
</dbReference>
<dbReference type="SUPFAM" id="SSF56808">
    <property type="entry name" value="Ribosomal protein L1"/>
    <property type="match status" value="1"/>
</dbReference>
<dbReference type="PROSITE" id="PS01199">
    <property type="entry name" value="RIBOSOMAL_L1"/>
    <property type="match status" value="1"/>
</dbReference>
<evidence type="ECO:0000255" key="1">
    <source>
        <dbReference type="HAMAP-Rule" id="MF_01318"/>
    </source>
</evidence>
<evidence type="ECO:0000305" key="2"/>
<gene>
    <name evidence="1" type="primary">rplA</name>
    <name type="ordered locus">EF_2718</name>
</gene>
<feature type="chain" id="PRO_0000125657" description="Large ribosomal subunit protein uL1">
    <location>
        <begin position="1"/>
        <end position="229"/>
    </location>
</feature>
<comment type="function">
    <text evidence="1">Binds directly to 23S rRNA. The L1 stalk is quite mobile in the ribosome, and is involved in E site tRNA release.</text>
</comment>
<comment type="function">
    <text evidence="1">Protein L1 is also a translational repressor protein, it controls the translation of the L11 operon by binding to its mRNA.</text>
</comment>
<comment type="subunit">
    <text evidence="1">Part of the 50S ribosomal subunit.</text>
</comment>
<comment type="similarity">
    <text evidence="1">Belongs to the universal ribosomal protein uL1 family.</text>
</comment>
<keyword id="KW-0002">3D-structure</keyword>
<keyword id="KW-1185">Reference proteome</keyword>
<keyword id="KW-0678">Repressor</keyword>
<keyword id="KW-0687">Ribonucleoprotein</keyword>
<keyword id="KW-0689">Ribosomal protein</keyword>
<keyword id="KW-0694">RNA-binding</keyword>
<keyword id="KW-0699">rRNA-binding</keyword>
<keyword id="KW-0810">Translation regulation</keyword>
<keyword id="KW-0820">tRNA-binding</keyword>
<reference key="1">
    <citation type="journal article" date="2003" name="Science">
        <title>Role of mobile DNA in the evolution of vancomycin-resistant Enterococcus faecalis.</title>
        <authorList>
            <person name="Paulsen I.T."/>
            <person name="Banerjei L."/>
            <person name="Myers G.S.A."/>
            <person name="Nelson K.E."/>
            <person name="Seshadri R."/>
            <person name="Read T.D."/>
            <person name="Fouts D.E."/>
            <person name="Eisen J.A."/>
            <person name="Gill S.R."/>
            <person name="Heidelberg J.F."/>
            <person name="Tettelin H."/>
            <person name="Dodson R.J."/>
            <person name="Umayam L.A."/>
            <person name="Brinkac L.M."/>
            <person name="Beanan M.J."/>
            <person name="Daugherty S.C."/>
            <person name="DeBoy R.T."/>
            <person name="Durkin S.A."/>
            <person name="Kolonay J.F."/>
            <person name="Madupu R."/>
            <person name="Nelson W.C."/>
            <person name="Vamathevan J.J."/>
            <person name="Tran B."/>
            <person name="Upton J."/>
            <person name="Hansen T."/>
            <person name="Shetty J."/>
            <person name="Khouri H.M."/>
            <person name="Utterback T.R."/>
            <person name="Radune D."/>
            <person name="Ketchum K.A."/>
            <person name="Dougherty B.A."/>
            <person name="Fraser C.M."/>
        </authorList>
    </citation>
    <scope>NUCLEOTIDE SEQUENCE [LARGE SCALE GENOMIC DNA]</scope>
    <source>
        <strain>ATCC 700802 / V583</strain>
    </source>
</reference>
<name>RL1_ENTFA</name>
<organism>
    <name type="scientific">Enterococcus faecalis (strain ATCC 700802 / V583)</name>
    <dbReference type="NCBI Taxonomy" id="226185"/>
    <lineage>
        <taxon>Bacteria</taxon>
        <taxon>Bacillati</taxon>
        <taxon>Bacillota</taxon>
        <taxon>Bacilli</taxon>
        <taxon>Lactobacillales</taxon>
        <taxon>Enterococcaceae</taxon>
        <taxon>Enterococcus</taxon>
    </lineage>
</organism>
<sequence>MAKKSKKMQEALKKVDATKAYSVEEAVALAKDTNIAKFDATVEVAYKLNVDPKKADQQIRGAVVLPNGTGKTQTVLVFAKGEKAKEAEAAGADFVGDDDMVAKIQGGWFDFDVVVATPDMMATVGKLGRVLGPKGLMPNPKTGTVTMDVTKAVEEVKAGKVTYRVDKAGNIHVPIGKVSFDNEKLVENFNTINDVLLKAKPSTAKGQYIKNISVTTTFGPGIHVDQASF</sequence>
<accession>Q830Q6</accession>
<proteinExistence type="evidence at protein level"/>